<organism>
    <name type="scientific">Cyanothece sp. (strain PCC 7425 / ATCC 29141)</name>
    <dbReference type="NCBI Taxonomy" id="395961"/>
    <lineage>
        <taxon>Bacteria</taxon>
        <taxon>Bacillati</taxon>
        <taxon>Cyanobacteriota</taxon>
        <taxon>Cyanophyceae</taxon>
        <taxon>Gomontiellales</taxon>
        <taxon>Cyanothecaceae</taxon>
        <taxon>Cyanothece</taxon>
    </lineage>
</organism>
<evidence type="ECO:0000255" key="1">
    <source>
        <dbReference type="HAMAP-Rule" id="MF_00165"/>
    </source>
</evidence>
<proteinExistence type="inferred from homology"/>
<comment type="function">
    <text evidence="1">Phosphorylation of dTMP to form dTDP in both de novo and salvage pathways of dTTP synthesis.</text>
</comment>
<comment type="catalytic activity">
    <reaction evidence="1">
        <text>dTMP + ATP = dTDP + ADP</text>
        <dbReference type="Rhea" id="RHEA:13517"/>
        <dbReference type="ChEBI" id="CHEBI:30616"/>
        <dbReference type="ChEBI" id="CHEBI:58369"/>
        <dbReference type="ChEBI" id="CHEBI:63528"/>
        <dbReference type="ChEBI" id="CHEBI:456216"/>
        <dbReference type="EC" id="2.7.4.9"/>
    </reaction>
</comment>
<comment type="similarity">
    <text evidence="1">Belongs to the thymidylate kinase family.</text>
</comment>
<keyword id="KW-0067">ATP-binding</keyword>
<keyword id="KW-0418">Kinase</keyword>
<keyword id="KW-0545">Nucleotide biosynthesis</keyword>
<keyword id="KW-0547">Nucleotide-binding</keyword>
<keyword id="KW-0808">Transferase</keyword>
<gene>
    <name evidence="1" type="primary">tmk</name>
    <name type="ordered locus">Cyan7425_0992</name>
</gene>
<sequence length="234" mass="26112">MKGKLIVFEGGEGSGKTTQLQRSRQWLESSGWLARLQQTLPTLAKPLLVTREPGGTALGIKLRQLLLNSDPEDVIQSRTELLLFAADRAQHVATRLQPHLEAGGLILCDRFTDSTVAYQGYGRGLSLALIDQLNQIATDGLTSDLTLWLDLDVEMGLERSRQRLQQSGGGLDRIERGEIAFHQRVQQGFRALSQAAPERIVTIDASQPEAMVADKIQRILEEKLWQWYPQVSML</sequence>
<protein>
    <recommendedName>
        <fullName evidence="1">Thymidylate kinase</fullName>
        <ecNumber evidence="1">2.7.4.9</ecNumber>
    </recommendedName>
    <alternativeName>
        <fullName evidence="1">dTMP kinase</fullName>
    </alternativeName>
</protein>
<feature type="chain" id="PRO_1000123567" description="Thymidylate kinase">
    <location>
        <begin position="1"/>
        <end position="234"/>
    </location>
</feature>
<feature type="binding site" evidence="1">
    <location>
        <begin position="10"/>
        <end position="17"/>
    </location>
    <ligand>
        <name>ATP</name>
        <dbReference type="ChEBI" id="CHEBI:30616"/>
    </ligand>
</feature>
<accession>B8HXT9</accession>
<reference key="1">
    <citation type="journal article" date="2011" name="MBio">
        <title>Novel metabolic attributes of the genus Cyanothece, comprising a group of unicellular nitrogen-fixing Cyanobacteria.</title>
        <authorList>
            <person name="Bandyopadhyay A."/>
            <person name="Elvitigala T."/>
            <person name="Welsh E."/>
            <person name="Stockel J."/>
            <person name="Liberton M."/>
            <person name="Min H."/>
            <person name="Sherman L.A."/>
            <person name="Pakrasi H.B."/>
        </authorList>
    </citation>
    <scope>NUCLEOTIDE SEQUENCE [LARGE SCALE GENOMIC DNA]</scope>
    <source>
        <strain>PCC 7425 / ATCC 29141</strain>
    </source>
</reference>
<name>KTHY_CYAP4</name>
<dbReference type="EC" id="2.7.4.9" evidence="1"/>
<dbReference type="EMBL" id="CP001344">
    <property type="protein sequence ID" value="ACL43378.1"/>
    <property type="molecule type" value="Genomic_DNA"/>
</dbReference>
<dbReference type="SMR" id="B8HXT9"/>
<dbReference type="STRING" id="395961.Cyan7425_0992"/>
<dbReference type="KEGG" id="cyn:Cyan7425_0992"/>
<dbReference type="eggNOG" id="COG0125">
    <property type="taxonomic scope" value="Bacteria"/>
</dbReference>
<dbReference type="HOGENOM" id="CLU_049131_0_0_3"/>
<dbReference type="OrthoDB" id="9774907at2"/>
<dbReference type="GO" id="GO:0005829">
    <property type="term" value="C:cytosol"/>
    <property type="evidence" value="ECO:0007669"/>
    <property type="project" value="TreeGrafter"/>
</dbReference>
<dbReference type="GO" id="GO:0005524">
    <property type="term" value="F:ATP binding"/>
    <property type="evidence" value="ECO:0007669"/>
    <property type="project" value="UniProtKB-UniRule"/>
</dbReference>
<dbReference type="GO" id="GO:0004798">
    <property type="term" value="F:dTMP kinase activity"/>
    <property type="evidence" value="ECO:0007669"/>
    <property type="project" value="UniProtKB-UniRule"/>
</dbReference>
<dbReference type="GO" id="GO:0006233">
    <property type="term" value="P:dTDP biosynthetic process"/>
    <property type="evidence" value="ECO:0007669"/>
    <property type="project" value="InterPro"/>
</dbReference>
<dbReference type="GO" id="GO:0006235">
    <property type="term" value="P:dTTP biosynthetic process"/>
    <property type="evidence" value="ECO:0007669"/>
    <property type="project" value="UniProtKB-UniRule"/>
</dbReference>
<dbReference type="GO" id="GO:0006227">
    <property type="term" value="P:dUDP biosynthetic process"/>
    <property type="evidence" value="ECO:0007669"/>
    <property type="project" value="TreeGrafter"/>
</dbReference>
<dbReference type="CDD" id="cd01672">
    <property type="entry name" value="TMPK"/>
    <property type="match status" value="1"/>
</dbReference>
<dbReference type="FunFam" id="3.40.50.300:FF:000225">
    <property type="entry name" value="Thymidylate kinase"/>
    <property type="match status" value="1"/>
</dbReference>
<dbReference type="Gene3D" id="3.40.50.300">
    <property type="entry name" value="P-loop containing nucleotide triphosphate hydrolases"/>
    <property type="match status" value="1"/>
</dbReference>
<dbReference type="HAMAP" id="MF_00165">
    <property type="entry name" value="Thymidylate_kinase"/>
    <property type="match status" value="1"/>
</dbReference>
<dbReference type="InterPro" id="IPR027417">
    <property type="entry name" value="P-loop_NTPase"/>
</dbReference>
<dbReference type="InterPro" id="IPR039430">
    <property type="entry name" value="Thymidylate_kin-like_dom"/>
</dbReference>
<dbReference type="InterPro" id="IPR018095">
    <property type="entry name" value="Thymidylate_kin_CS"/>
</dbReference>
<dbReference type="InterPro" id="IPR018094">
    <property type="entry name" value="Thymidylate_kinase"/>
</dbReference>
<dbReference type="NCBIfam" id="TIGR00041">
    <property type="entry name" value="DTMP_kinase"/>
    <property type="match status" value="1"/>
</dbReference>
<dbReference type="PANTHER" id="PTHR10344">
    <property type="entry name" value="THYMIDYLATE KINASE"/>
    <property type="match status" value="1"/>
</dbReference>
<dbReference type="PANTHER" id="PTHR10344:SF4">
    <property type="entry name" value="UMP-CMP KINASE 2, MITOCHONDRIAL"/>
    <property type="match status" value="1"/>
</dbReference>
<dbReference type="Pfam" id="PF02223">
    <property type="entry name" value="Thymidylate_kin"/>
    <property type="match status" value="1"/>
</dbReference>
<dbReference type="SUPFAM" id="SSF52540">
    <property type="entry name" value="P-loop containing nucleoside triphosphate hydrolases"/>
    <property type="match status" value="1"/>
</dbReference>
<dbReference type="PROSITE" id="PS01331">
    <property type="entry name" value="THYMIDYLATE_KINASE"/>
    <property type="match status" value="1"/>
</dbReference>